<reference key="1">
    <citation type="journal article" date="2008" name="J. Bacteriol.">
        <title>The pangenome structure of Escherichia coli: comparative genomic analysis of E. coli commensal and pathogenic isolates.</title>
        <authorList>
            <person name="Rasko D.A."/>
            <person name="Rosovitz M.J."/>
            <person name="Myers G.S.A."/>
            <person name="Mongodin E.F."/>
            <person name="Fricke W.F."/>
            <person name="Gajer P."/>
            <person name="Crabtree J."/>
            <person name="Sebaihia M."/>
            <person name="Thomson N.R."/>
            <person name="Chaudhuri R."/>
            <person name="Henderson I.R."/>
            <person name="Sperandio V."/>
            <person name="Ravel J."/>
        </authorList>
    </citation>
    <scope>NUCLEOTIDE SEQUENCE [LARGE SCALE GENOMIC DNA]</scope>
    <source>
        <strain>HS</strain>
    </source>
</reference>
<proteinExistence type="inferred from homology"/>
<evidence type="ECO:0000255" key="1">
    <source>
        <dbReference type="HAMAP-Rule" id="MF_00195"/>
    </source>
</evidence>
<dbReference type="EMBL" id="CP000802">
    <property type="protein sequence ID" value="ABV06921.1"/>
    <property type="molecule type" value="Genomic_DNA"/>
</dbReference>
<dbReference type="RefSeq" id="WP_000249410.1">
    <property type="nucleotide sequence ID" value="NC_009800.1"/>
</dbReference>
<dbReference type="SMR" id="A8A317"/>
<dbReference type="GeneID" id="75206204"/>
<dbReference type="KEGG" id="ecx:EcHS_A2662"/>
<dbReference type="HOGENOM" id="CLU_016077_6_2_6"/>
<dbReference type="GO" id="GO:0005525">
    <property type="term" value="F:GTP binding"/>
    <property type="evidence" value="ECO:0007669"/>
    <property type="project" value="UniProtKB-UniRule"/>
</dbReference>
<dbReference type="GO" id="GO:0043022">
    <property type="term" value="F:ribosome binding"/>
    <property type="evidence" value="ECO:0007669"/>
    <property type="project" value="TreeGrafter"/>
</dbReference>
<dbReference type="GO" id="GO:0042254">
    <property type="term" value="P:ribosome biogenesis"/>
    <property type="evidence" value="ECO:0007669"/>
    <property type="project" value="UniProtKB-KW"/>
</dbReference>
<dbReference type="CDD" id="cd01894">
    <property type="entry name" value="EngA1"/>
    <property type="match status" value="1"/>
</dbReference>
<dbReference type="CDD" id="cd01895">
    <property type="entry name" value="EngA2"/>
    <property type="match status" value="1"/>
</dbReference>
<dbReference type="FunFam" id="3.30.300.20:FF:000004">
    <property type="entry name" value="GTPase Der"/>
    <property type="match status" value="1"/>
</dbReference>
<dbReference type="FunFam" id="3.40.50.300:FF:000040">
    <property type="entry name" value="GTPase Der"/>
    <property type="match status" value="1"/>
</dbReference>
<dbReference type="FunFam" id="3.40.50.300:FF:000057">
    <property type="entry name" value="GTPase Der"/>
    <property type="match status" value="1"/>
</dbReference>
<dbReference type="Gene3D" id="3.30.300.20">
    <property type="match status" value="1"/>
</dbReference>
<dbReference type="Gene3D" id="3.40.50.300">
    <property type="entry name" value="P-loop containing nucleotide triphosphate hydrolases"/>
    <property type="match status" value="2"/>
</dbReference>
<dbReference type="HAMAP" id="MF_00195">
    <property type="entry name" value="GTPase_Der"/>
    <property type="match status" value="1"/>
</dbReference>
<dbReference type="InterPro" id="IPR031166">
    <property type="entry name" value="G_ENGA"/>
</dbReference>
<dbReference type="InterPro" id="IPR006073">
    <property type="entry name" value="GTP-bd"/>
</dbReference>
<dbReference type="InterPro" id="IPR016484">
    <property type="entry name" value="GTPase_Der"/>
</dbReference>
<dbReference type="InterPro" id="IPR032859">
    <property type="entry name" value="KH_dom-like"/>
</dbReference>
<dbReference type="InterPro" id="IPR015946">
    <property type="entry name" value="KH_dom-like_a/b"/>
</dbReference>
<dbReference type="InterPro" id="IPR027417">
    <property type="entry name" value="P-loop_NTPase"/>
</dbReference>
<dbReference type="InterPro" id="IPR005225">
    <property type="entry name" value="Small_GTP-bd"/>
</dbReference>
<dbReference type="NCBIfam" id="TIGR03594">
    <property type="entry name" value="GTPase_EngA"/>
    <property type="match status" value="1"/>
</dbReference>
<dbReference type="NCBIfam" id="TIGR00231">
    <property type="entry name" value="small_GTP"/>
    <property type="match status" value="2"/>
</dbReference>
<dbReference type="PANTHER" id="PTHR43834">
    <property type="entry name" value="GTPASE DER"/>
    <property type="match status" value="1"/>
</dbReference>
<dbReference type="PANTHER" id="PTHR43834:SF6">
    <property type="entry name" value="GTPASE DER"/>
    <property type="match status" value="1"/>
</dbReference>
<dbReference type="Pfam" id="PF14714">
    <property type="entry name" value="KH_dom-like"/>
    <property type="match status" value="1"/>
</dbReference>
<dbReference type="Pfam" id="PF01926">
    <property type="entry name" value="MMR_HSR1"/>
    <property type="match status" value="2"/>
</dbReference>
<dbReference type="PIRSF" id="PIRSF006485">
    <property type="entry name" value="GTP-binding_EngA"/>
    <property type="match status" value="1"/>
</dbReference>
<dbReference type="PRINTS" id="PR00326">
    <property type="entry name" value="GTP1OBG"/>
</dbReference>
<dbReference type="SUPFAM" id="SSF52540">
    <property type="entry name" value="P-loop containing nucleoside triphosphate hydrolases"/>
    <property type="match status" value="2"/>
</dbReference>
<dbReference type="PROSITE" id="PS51712">
    <property type="entry name" value="G_ENGA"/>
    <property type="match status" value="2"/>
</dbReference>
<feature type="chain" id="PRO_1000058523" description="GTPase Der">
    <location>
        <begin position="1"/>
        <end position="490"/>
    </location>
</feature>
<feature type="domain" description="EngA-type G 1">
    <location>
        <begin position="3"/>
        <end position="166"/>
    </location>
</feature>
<feature type="domain" description="EngA-type G 2">
    <location>
        <begin position="203"/>
        <end position="376"/>
    </location>
</feature>
<feature type="domain" description="KH-like" evidence="1">
    <location>
        <begin position="377"/>
        <end position="461"/>
    </location>
</feature>
<feature type="binding site" evidence="1">
    <location>
        <begin position="9"/>
        <end position="16"/>
    </location>
    <ligand>
        <name>GTP</name>
        <dbReference type="ChEBI" id="CHEBI:37565"/>
        <label>1</label>
    </ligand>
</feature>
<feature type="binding site" evidence="1">
    <location>
        <begin position="56"/>
        <end position="60"/>
    </location>
    <ligand>
        <name>GTP</name>
        <dbReference type="ChEBI" id="CHEBI:37565"/>
        <label>1</label>
    </ligand>
</feature>
<feature type="binding site" evidence="1">
    <location>
        <begin position="118"/>
        <end position="121"/>
    </location>
    <ligand>
        <name>GTP</name>
        <dbReference type="ChEBI" id="CHEBI:37565"/>
        <label>1</label>
    </ligand>
</feature>
<feature type="binding site" evidence="1">
    <location>
        <begin position="209"/>
        <end position="216"/>
    </location>
    <ligand>
        <name>GTP</name>
        <dbReference type="ChEBI" id="CHEBI:37565"/>
        <label>2</label>
    </ligand>
</feature>
<feature type="binding site" evidence="1">
    <location>
        <begin position="256"/>
        <end position="260"/>
    </location>
    <ligand>
        <name>GTP</name>
        <dbReference type="ChEBI" id="CHEBI:37565"/>
        <label>2</label>
    </ligand>
</feature>
<feature type="binding site" evidence="1">
    <location>
        <begin position="321"/>
        <end position="324"/>
    </location>
    <ligand>
        <name>GTP</name>
        <dbReference type="ChEBI" id="CHEBI:37565"/>
        <label>2</label>
    </ligand>
</feature>
<name>DER_ECOHS</name>
<protein>
    <recommendedName>
        <fullName evidence="1">GTPase Der</fullName>
    </recommendedName>
    <alternativeName>
        <fullName evidence="1">GTP-binding protein EngA</fullName>
    </alternativeName>
</protein>
<sequence length="490" mass="55036">MVPVVALVGRPNVGKSTLFNRLTRTRDALVADFPGLTRDRKYGRAEIEGREFICIDTGGIDGTEDGVETRMAEQSLLAIEEADVVLFMVDARAGLMPADEAIAKHLRSREKPTFLVANKTDGLDPDQAVVDFYSLGLGEIYPIAASHGRGVLSLLEHVLLPWMEDLAPQEEVDEDAEYWAQFEAEENGEEEEEDDFDPQSLPIKLAIVGRPNVGKSTLTNRILGEERVVVYDMPGTTRDSIYIPMERDGREYVLIDTAGVRKRGKITDAVEKFSVIKTLQAIEDANVVMLVIDAREGISDQDLSLLGFILNSGRSLVIVVNKWDGLSQEVKEQVKETLDFRLGFIDFARVHFISALHGSGVGNLFESVREAYDSSTRRVGTSMLTRIMTMAVEDHQPPLVRGRRVKLKYAHAGGYNPPIVVIHGNQVKDLPDSYKRYLMNYFRKSLDVMGSPIRIQFKEGENPYANKRNTLTPTQMRKRKRLMKHIKKNK</sequence>
<keyword id="KW-0342">GTP-binding</keyword>
<keyword id="KW-0547">Nucleotide-binding</keyword>
<keyword id="KW-0677">Repeat</keyword>
<keyword id="KW-0690">Ribosome biogenesis</keyword>
<organism>
    <name type="scientific">Escherichia coli O9:H4 (strain HS)</name>
    <dbReference type="NCBI Taxonomy" id="331112"/>
    <lineage>
        <taxon>Bacteria</taxon>
        <taxon>Pseudomonadati</taxon>
        <taxon>Pseudomonadota</taxon>
        <taxon>Gammaproteobacteria</taxon>
        <taxon>Enterobacterales</taxon>
        <taxon>Enterobacteriaceae</taxon>
        <taxon>Escherichia</taxon>
    </lineage>
</organism>
<comment type="function">
    <text evidence="1">GTPase that plays an essential role in the late steps of ribosome biogenesis.</text>
</comment>
<comment type="subunit">
    <text evidence="1">Associates with the 50S ribosomal subunit.</text>
</comment>
<comment type="similarity">
    <text evidence="1">Belongs to the TRAFAC class TrmE-Era-EngA-EngB-Septin-like GTPase superfamily. EngA (Der) GTPase family.</text>
</comment>
<gene>
    <name evidence="1" type="primary">der</name>
    <name type="synonym">engA</name>
    <name type="ordered locus">EcHS_A2662</name>
</gene>
<accession>A8A317</accession>